<protein>
    <recommendedName>
        <fullName>Myosin-3</fullName>
    </recommendedName>
    <alternativeName>
        <fullName>Myosin heavy chain A</fullName>
        <shortName>MHC A</shortName>
    </alternativeName>
</protein>
<organism>
    <name type="scientific">Caenorhabditis elegans</name>
    <dbReference type="NCBI Taxonomy" id="6239"/>
    <lineage>
        <taxon>Eukaryota</taxon>
        <taxon>Metazoa</taxon>
        <taxon>Ecdysozoa</taxon>
        <taxon>Nematoda</taxon>
        <taxon>Chromadorea</taxon>
        <taxon>Rhabditida</taxon>
        <taxon>Rhabditina</taxon>
        <taxon>Rhabditomorpha</taxon>
        <taxon>Rhabditoidea</taxon>
        <taxon>Rhabditidae</taxon>
        <taxon>Peloderinae</taxon>
        <taxon>Caenorhabditis</taxon>
    </lineage>
</organism>
<name>MYO3_CAEEL</name>
<reference key="1">
    <citation type="journal article" date="1989" name="J. Mol. Biol.">
        <title>Sequence analysis of the complete Caenorhabditis elegans myosin heavy chain gene family.</title>
        <authorList>
            <person name="Dibb N.J."/>
            <person name="Maruyama I.N."/>
            <person name="Krause M."/>
            <person name="Karn J."/>
        </authorList>
    </citation>
    <scope>NUCLEOTIDE SEQUENCE [GENOMIC DNA]</scope>
    <source>
        <strain>Bristol N2</strain>
    </source>
</reference>
<reference key="2">
    <citation type="journal article" date="1998" name="Science">
        <title>Genome sequence of the nematode C. elegans: a platform for investigating biology.</title>
        <authorList>
            <consortium name="The C. elegans sequencing consortium"/>
        </authorList>
    </citation>
    <scope>NUCLEOTIDE SEQUENCE [LARGE SCALE GENOMIC DNA]</scope>
    <source>
        <strain>Bristol N2</strain>
    </source>
</reference>
<reference key="3">
    <citation type="journal article" date="1983" name="Cell">
        <title>Differential localization of two myosins within nematode thick filaments.</title>
        <authorList>
            <person name="Miller D.M. III"/>
            <person name="Ortiz I."/>
            <person name="Berliner G.C."/>
            <person name="Epstein H.F."/>
        </authorList>
    </citation>
    <scope>SUBCELLULAR LOCATION</scope>
    <scope>TISSUE SPECIFICITY</scope>
</reference>
<reference key="4">
    <citation type="journal article" date="1986" name="Proc. Natl. Acad. Sci. U.S.A.">
        <title>Immunological identification of the genes encoding the four myosin heavy chain isoforms of Caenorhabditis elegans.</title>
        <authorList>
            <person name="Miller D.M."/>
            <person name="Stockdale F.E."/>
            <person name="Karn J."/>
        </authorList>
    </citation>
    <scope>IDENTIFICATION</scope>
</reference>
<reference key="5">
    <citation type="journal article" date="1987" name="J. Cell Biol.">
        <title>Immunochemical localization of myosin heavy chain isoforms and paramyosin in developmentally and structurally diverse muscle cell types of the nematode Caenorhabditis elegans.</title>
        <authorList>
            <person name="Ardizzi J.P."/>
            <person name="Epstein H.F."/>
        </authorList>
    </citation>
    <scope>TISSUE SPECIFICITY</scope>
</reference>
<reference key="6">
    <citation type="journal article" date="1989" name="EMBO J.">
        <title>Proper expression of myosin genes in transgenic nematodes.</title>
        <authorList>
            <person name="Fire A."/>
            <person name="Waterston R.H."/>
        </authorList>
    </citation>
    <scope>IDENTIFICATION</scope>
</reference>
<reference key="7">
    <citation type="journal article" date="1989" name="EMBO J.">
        <title>The minor myosin heavy chain, mhcA, of Caenorhabditis elegans is necessary for the initiation of thick filament assembly.</title>
        <authorList>
            <person name="Waterston R.H."/>
        </authorList>
    </citation>
    <scope>FUNCTION</scope>
    <scope>DISRUPTION PHENOTYPE</scope>
</reference>
<reference key="8">
    <citation type="journal article" date="1990" name="Proc. Natl. Acad. Sci. U.S.A.">
        <title>Modulation of muscle gene expression in Caenorhabditis elegans: differential levels of transcripts, mRNAs, and polypeptides for thick filament proteins during nematode development.</title>
        <authorList>
            <person name="Honda S."/>
            <person name="Epstein H.F."/>
        </authorList>
    </citation>
    <scope>DEVELOPMENTAL STAGE</scope>
</reference>
<reference key="9">
    <citation type="journal article" date="2007" name="Dev. Dyn.">
        <title>Structural components of the nonstriated contractile apparatuses in the Caenorhabditis elegans gonadal myoepithelial sheath and their essential roles for ovulation.</title>
        <authorList>
            <person name="Ono K."/>
            <person name="Yu R."/>
            <person name="Ono S."/>
        </authorList>
    </citation>
    <scope>FUNCTION</scope>
    <scope>SUBCELLULAR LOCATION</scope>
    <scope>TISSUE SPECIFICITY</scope>
    <scope>DISRUPTION PHENOTYPE</scope>
</reference>
<sequence>MSGNPDAFENDPGFPFLGISREARAATAARPFDSKKNCWIPDPEDGFVAAEIQSTTGEQVTVVTVKGNQITVKKDQCQEMNPPKFDKTEDMANLTFLNEASVLGNLKDRYKDLMIYTYSGLFCVVINPYKRLPIYSESVIKHFMGKRRNEMPPHLFAVSDEAYRNMVQDKENQSMLITGESGAGKTENTKKVISYFAIVGATQAASGKEAKDGKKGGTLEEQIVQTNPVLEAFGNAKTVRNNNSSRFGKFIRTHFSGSGKLAGGDIEHYLLEKSRVVRQAPGERCYHIFYQIMSGNDPSLRGKLKLSNDITYYHFCSQAELTIEGMDDKEEMRLTQEAFDIMGFEDNETMDLYRSTAGIMHMGEMKFKQRPREEQAEPDGEEDALNAAAMLGIQAEEFLKALTKPRVRVGTEWVNKGQNLEQVNWAVSGLAKAIYARMFKWIITRCNKTLDAKEIERKHFIGVLDIAGFEIFDLNSFEQLWINFVNERLQQFFNHHMFVLEQEEYKREGIAWTFIDFGLDLQACIELIEKPLGIISILDEECIVPKATDMTYAQKLLDQHLGKHPNFQKPKPPKGKQGDAHFAIVHYAGTVRYNATNFLEKNKDPLNDTAVALLKHSTDNSLMLDIWQDYQTQEEAAEAAKAGQTAGGKRGKSSSFATVSMIYRESLNNLMNMLYQTHPHFIRCIIPNEKKASGVIDSALVLNQLTCNGVLEGIRICRKGFPNRMLYPDFKHRYAILAADAAKESDPKKASVGILDKISVDGNLTDEEFKVGETKIFFKAGVLAKLEDLRDEILSRIVTMFQSRIRSYLAKAEVRRRYEQQTGLLVVQRNVRAWCTLRTWEWFKLFGKVKPMLKAGKEQEAMGELAVKIQKLEEAVQRGEIARSQLESQVADLVEEKNALFLSLETEKANLADAEERNEKLNQLKATLESKLSDITGQLEDMQERNEDLARQKKKTDQELSDTKKHVQDLELSLRKAEQEKQSRDHNIRSLQDEMANQDEAVAKLNKEKKHQEESNRKLNEDLQSEEDKVNHLEKIRNKLEQQMDELEENIDREKRSRGDIEKAKRKVEGDLKVAQENIDEITKQKHDVETTLKRKEEDLHHTNAKLAENNSIIAKLQRLIKELTARNAELEEELEAERNSRQKSDRSRSEAERELEELTERLEQQGGATAAQLEANKKREAEIAKLRREKEEDSLNHETAISSLRKRHGDSVAELTEQLETLQKLKAKSEAEKSKLQRDLEESQHATDSEVRSRQDLEKALKTIEVQYSELQTKADEQSRQLQDFAALKNRLNNENSDLNRSLEEMDNQLNSLHRLKSTLQSQLDETRRNYDEESRERQALAATAKNLEHENTILREHLDEEAESKADLTRQISKLNAEIQQWKARFDSEGLNKLEEIEAAKKALQLKVQELTDTNEGLFAKIASQEKVRFKLMQDLDDAQSDVEKAAAQVAFYEKHRRQFESIIAEWKKKTDDLSSELDAAQRDNRQLSTDLFKAKTANDELAEYLDSTRRENKSLAQEVKDLTDQLGEGGRSVAELQKIVRKLEVEKEELQKALDEAEAALEAEEAKVLRAQIEVSQIRSEIEKRIQEKEEEFENTRRNHQRALESMQATLEAETKQKEEALRIKKKLESDINDLEIALDHANRAYADAQKTIKKYMETVQELQFQIEEEQRQKDEIREQFLASEKRNAILQSEKDELAQQAEAAERARRNAEAECIELREQNNDLNAHVSALTGQRRKLEGELLAAHAELEEIANELKNAVEQGQKASADAARLAEELRQEQEHSMHIERIRKGLELQIKEMQIRLDDAENAALKGGKKIIAQLEARIRAIEQELDGEQRRHQDTEKNWRKAERRVKEVEFQVVEEKKNEERLTELVDKLQCKLKIFKRQVEEAEEVAASNLNKYKVLTAQFEQAEERADIAENALSKMRNKIRASASMAPPDGFPMVPSASSALIRSSSNARFL</sequence>
<comment type="function">
    <text evidence="6 8">Essential for muscle contraction (PubMed:2583106). Involved in ovulation likely by regulating the contraction of gonadal myoepithelial sheath cells (PubMed:17326220).</text>
</comment>
<comment type="subunit">
    <text>Muscle myosin is a hexameric protein that consists of 2 heavy chain subunits (MHC), 2 alkali light chain subunits (MLC) and 2 regulatory light chain subunits (MLC-2).</text>
</comment>
<comment type="subcellular location">
    <subcellularLocation>
        <location evidence="6 10">Cytoplasm</location>
        <location evidence="6 10">Myofibril</location>
    </subcellularLocation>
    <subcellularLocation>
        <location evidence="6 10">Cytoplasm</location>
        <location evidence="6 10">Myofibril</location>
        <location evidence="6 10">Sarcomere</location>
        <location evidence="6 10">A band</location>
    </subcellularLocation>
    <text evidence="6">In myoepithelial sheath cells, forms filaments assembled in a nonstriated meshwork. Colocalizes with unc-15/paramyosin and with unc-89 to M line-like structures. Does not colocalize with beta integrin pat-3.</text>
</comment>
<comment type="tissue specificity">
    <text evidence="6 9 10">Expressed in body wall muscles, neighboring vulval muscle cells and the contractile sheath covering the hermaphrodite gonad (myoepithelial sheath cells).</text>
</comment>
<comment type="developmental stage">
    <text evidence="7">Expression at early and late larval stages is 1:20 of unc-54 (mhc b), however later at L1 and L4 expression is more equal at 1:1.7 and 1:3.1 respectively.</text>
</comment>
<comment type="domain">
    <text>The rodlike tail sequence is highly repetitive, showing cycles of a 28-residue repeat pattern composed of 4 heptapeptides, characteristic for alpha-helical coiled coils.</text>
</comment>
<comment type="domain">
    <text evidence="11">Limited proteolysis of myosin heavy chain produces 1 light meromyosin (LMM) and 1 heavy meromyosin (HMM). HMM can be further cleaved into 2 globular subfragments (S1) and 1 rod-shaped subfragment (S2).</text>
</comment>
<comment type="disruption phenotype">
    <text evidence="8 9">Worms exhibit retarded embryonic development and paralysis (PubMed:2583106). Muscle organization shows disruption with abnormalities of both the filament lattice that constitutes the A-band and the hypodermal cell (PubMed:2583106). RNAi-mediated knockdown causes an accumulation in the proximal gonad of endomitotic mature oocytes in 51 percent of animals (PubMed:17326220).</text>
</comment>
<comment type="miscellaneous">
    <text>There are four different myosin heavy chains in C.elegans.</text>
</comment>
<comment type="miscellaneous">
    <text>MHC A and MHC B are found exclusively in the body wall muscle. They co-assemble into body wall thick filament.</text>
</comment>
<comment type="similarity">
    <text evidence="11">Belongs to the TRAFAC class myosin-kinesin ATPase superfamily. Myosin family.</text>
</comment>
<accession>P12844</accession>
<accession>Q21440</accession>
<evidence type="ECO:0000255" key="1"/>
<evidence type="ECO:0000255" key="2">
    <source>
        <dbReference type="PROSITE-ProRule" id="PRU00116"/>
    </source>
</evidence>
<evidence type="ECO:0000255" key="3">
    <source>
        <dbReference type="PROSITE-ProRule" id="PRU00782"/>
    </source>
</evidence>
<evidence type="ECO:0000255" key="4">
    <source>
        <dbReference type="PROSITE-ProRule" id="PRU01190"/>
    </source>
</evidence>
<evidence type="ECO:0000256" key="5">
    <source>
        <dbReference type="SAM" id="MobiDB-lite"/>
    </source>
</evidence>
<evidence type="ECO:0000269" key="6">
    <source>
    </source>
</evidence>
<evidence type="ECO:0000269" key="7">
    <source>
    </source>
</evidence>
<evidence type="ECO:0000269" key="8">
    <source>
    </source>
</evidence>
<evidence type="ECO:0000269" key="9">
    <source>
    </source>
</evidence>
<evidence type="ECO:0000269" key="10">
    <source>
    </source>
</evidence>
<evidence type="ECO:0000305" key="11"/>
<keyword id="KW-0009">Actin-binding</keyword>
<keyword id="KW-0067">ATP-binding</keyword>
<keyword id="KW-0175">Coiled coil</keyword>
<keyword id="KW-0963">Cytoplasm</keyword>
<keyword id="KW-0488">Methylation</keyword>
<keyword id="KW-0505">Motor protein</keyword>
<keyword id="KW-0514">Muscle protein</keyword>
<keyword id="KW-0518">Myosin</keyword>
<keyword id="KW-0547">Nucleotide-binding</keyword>
<keyword id="KW-1185">Reference proteome</keyword>
<keyword id="KW-0787">Thick filament</keyword>
<feature type="chain" id="PRO_0000123382" description="Myosin-3">
    <location>
        <begin position="1"/>
        <end position="1969"/>
    </location>
</feature>
<feature type="domain" description="Myosin N-terminal SH3-like" evidence="4">
    <location>
        <begin position="33"/>
        <end position="82"/>
    </location>
</feature>
<feature type="domain" description="Myosin motor" evidence="3">
    <location>
        <begin position="86"/>
        <end position="791"/>
    </location>
</feature>
<feature type="domain" description="IQ" evidence="2">
    <location>
        <begin position="794"/>
        <end position="823"/>
    </location>
</feature>
<feature type="region of interest" description="Actin-binding">
    <location>
        <begin position="667"/>
        <end position="689"/>
    </location>
</feature>
<feature type="region of interest" description="Actin-binding">
    <location>
        <begin position="770"/>
        <end position="784"/>
    </location>
</feature>
<feature type="region of interest" description="Disordered" evidence="5">
    <location>
        <begin position="942"/>
        <end position="966"/>
    </location>
</feature>
<feature type="region of interest" description="Disordered" evidence="5">
    <location>
        <begin position="1006"/>
        <end position="1029"/>
    </location>
</feature>
<feature type="region of interest" description="Disordered" evidence="5">
    <location>
        <begin position="1131"/>
        <end position="1213"/>
    </location>
</feature>
<feature type="region of interest" description="Disordered" evidence="5">
    <location>
        <begin position="1234"/>
        <end position="1255"/>
    </location>
</feature>
<feature type="coiled-coil region" evidence="1">
    <location>
        <begin position="857"/>
        <end position="1969"/>
    </location>
</feature>
<feature type="compositionally biased region" description="Basic and acidic residues" evidence="5">
    <location>
        <begin position="1137"/>
        <end position="1164"/>
    </location>
</feature>
<feature type="compositionally biased region" description="Basic and acidic residues" evidence="5">
    <location>
        <begin position="1176"/>
        <end position="1197"/>
    </location>
</feature>
<feature type="binding site">
    <location>
        <begin position="179"/>
        <end position="186"/>
    </location>
    <ligand>
        <name>ATP</name>
        <dbReference type="ChEBI" id="CHEBI:30616"/>
    </ligand>
</feature>
<feature type="modified residue" description="N6,N6,N6-trimethyllysine" evidence="1">
    <location>
        <position position="130"/>
    </location>
</feature>
<proteinExistence type="evidence at transcript level"/>
<gene>
    <name type="primary">myo-3</name>
    <name type="synonym">mhcA</name>
    <name type="ORF">K12F2.1</name>
</gene>
<dbReference type="EMBL" id="X08067">
    <property type="protein sequence ID" value="CAA30856.1"/>
    <property type="molecule type" value="Genomic_DNA"/>
</dbReference>
<dbReference type="EMBL" id="Z78199">
    <property type="protein sequence ID" value="CAB01576.2"/>
    <property type="molecule type" value="Genomic_DNA"/>
</dbReference>
<dbReference type="PIR" id="T23622">
    <property type="entry name" value="S02771"/>
</dbReference>
<dbReference type="RefSeq" id="NP_506065.2">
    <property type="nucleotide sequence ID" value="NM_073664.5"/>
</dbReference>
<dbReference type="SMR" id="P12844"/>
<dbReference type="BioGRID" id="44699">
    <property type="interactions" value="20"/>
</dbReference>
<dbReference type="FunCoup" id="P12844">
    <property type="interactions" value="172"/>
</dbReference>
<dbReference type="IntAct" id="P12844">
    <property type="interactions" value="6"/>
</dbReference>
<dbReference type="STRING" id="6239.K12F2.1.1"/>
<dbReference type="iPTMnet" id="P12844"/>
<dbReference type="PaxDb" id="6239-K12F2.1"/>
<dbReference type="PeptideAtlas" id="P12844"/>
<dbReference type="EnsemblMetazoa" id="K12F2.1.1">
    <property type="protein sequence ID" value="K12F2.1.1"/>
    <property type="gene ID" value="WBGene00003515"/>
</dbReference>
<dbReference type="GeneID" id="179676"/>
<dbReference type="KEGG" id="cel:CELE_K12F2.1"/>
<dbReference type="UCSC" id="K12F2.1">
    <property type="organism name" value="c. elegans"/>
</dbReference>
<dbReference type="AGR" id="WB:WBGene00003515"/>
<dbReference type="CTD" id="179676"/>
<dbReference type="WormBase" id="K12F2.1">
    <property type="protein sequence ID" value="CE34936"/>
    <property type="gene ID" value="WBGene00003515"/>
    <property type="gene designation" value="myo-3"/>
</dbReference>
<dbReference type="eggNOG" id="KOG0161">
    <property type="taxonomic scope" value="Eukaryota"/>
</dbReference>
<dbReference type="HOGENOM" id="CLU_000192_4_2_1"/>
<dbReference type="InParanoid" id="P12844"/>
<dbReference type="OMA" id="DTTQDKQ"/>
<dbReference type="OrthoDB" id="6108017at2759"/>
<dbReference type="PhylomeDB" id="P12844"/>
<dbReference type="SignaLink" id="P12844"/>
<dbReference type="PRO" id="PR:P12844"/>
<dbReference type="Proteomes" id="UP000001940">
    <property type="component" value="Chromosome V"/>
</dbReference>
<dbReference type="Bgee" id="WBGene00003515">
    <property type="expression patterns" value="Expressed in larva and 3 other cell types or tissues"/>
</dbReference>
<dbReference type="GO" id="GO:0031672">
    <property type="term" value="C:A band"/>
    <property type="evidence" value="ECO:0000314"/>
    <property type="project" value="UniProtKB"/>
</dbReference>
<dbReference type="GO" id="GO:0005737">
    <property type="term" value="C:cytoplasm"/>
    <property type="evidence" value="ECO:0000318"/>
    <property type="project" value="GO_Central"/>
</dbReference>
<dbReference type="GO" id="GO:0032982">
    <property type="term" value="C:myosin filament"/>
    <property type="evidence" value="ECO:0000318"/>
    <property type="project" value="GO_Central"/>
</dbReference>
<dbReference type="GO" id="GO:0016460">
    <property type="term" value="C:myosin II complex"/>
    <property type="evidence" value="ECO:0000318"/>
    <property type="project" value="GO_Central"/>
</dbReference>
<dbReference type="GO" id="GO:0005863">
    <property type="term" value="C:striated muscle myosin thick filament"/>
    <property type="evidence" value="ECO:0000314"/>
    <property type="project" value="UniProtKB"/>
</dbReference>
<dbReference type="GO" id="GO:0051015">
    <property type="term" value="F:actin filament binding"/>
    <property type="evidence" value="ECO:0000318"/>
    <property type="project" value="GO_Central"/>
</dbReference>
<dbReference type="GO" id="GO:0005524">
    <property type="term" value="F:ATP binding"/>
    <property type="evidence" value="ECO:0007669"/>
    <property type="project" value="UniProtKB-KW"/>
</dbReference>
<dbReference type="GO" id="GO:0003774">
    <property type="term" value="F:cytoskeletal motor activity"/>
    <property type="evidence" value="ECO:0000315"/>
    <property type="project" value="UniProtKB"/>
</dbReference>
<dbReference type="GO" id="GO:0000146">
    <property type="term" value="F:microfilament motor activity"/>
    <property type="evidence" value="ECO:0000318"/>
    <property type="project" value="GO_Central"/>
</dbReference>
<dbReference type="GO" id="GO:0007626">
    <property type="term" value="P:locomotory behavior"/>
    <property type="evidence" value="ECO:0000315"/>
    <property type="project" value="UniProtKB"/>
</dbReference>
<dbReference type="GO" id="GO:0006936">
    <property type="term" value="P:muscle contraction"/>
    <property type="evidence" value="ECO:0000318"/>
    <property type="project" value="GO_Central"/>
</dbReference>
<dbReference type="GO" id="GO:0060279">
    <property type="term" value="P:positive regulation of ovulation"/>
    <property type="evidence" value="ECO:0000315"/>
    <property type="project" value="UniProtKB"/>
</dbReference>
<dbReference type="GO" id="GO:0045214">
    <property type="term" value="P:sarcomere organization"/>
    <property type="evidence" value="ECO:0000318"/>
    <property type="project" value="GO_Central"/>
</dbReference>
<dbReference type="CDD" id="cd01377">
    <property type="entry name" value="MYSc_class_II"/>
    <property type="match status" value="1"/>
</dbReference>
<dbReference type="FunFam" id="1.10.10.820:FF:000001">
    <property type="entry name" value="Myosin heavy chain"/>
    <property type="match status" value="1"/>
</dbReference>
<dbReference type="FunFam" id="1.20.5.340:FF:000036">
    <property type="entry name" value="Myosin heavy chain"/>
    <property type="match status" value="1"/>
</dbReference>
<dbReference type="FunFam" id="1.20.5.370:FF:000008">
    <property type="entry name" value="Myosin heavy chain"/>
    <property type="match status" value="1"/>
</dbReference>
<dbReference type="FunFam" id="1.20.58.530:FF:000001">
    <property type="entry name" value="Myosin heavy chain"/>
    <property type="match status" value="1"/>
</dbReference>
<dbReference type="FunFam" id="2.30.30.360:FF:000001">
    <property type="entry name" value="Myosin heavy chain"/>
    <property type="match status" value="1"/>
</dbReference>
<dbReference type="FunFam" id="1.20.5.4820:FF:000002">
    <property type="entry name" value="Myosin heavy chain 10"/>
    <property type="match status" value="1"/>
</dbReference>
<dbReference type="FunFam" id="1.20.5.340:FF:000019">
    <property type="entry name" value="Myosin heavy chain, isoform G"/>
    <property type="match status" value="1"/>
</dbReference>
<dbReference type="FunFam" id="1.20.5.370:FF:000009">
    <property type="entry name" value="Myosin heavy chain, isoform G"/>
    <property type="match status" value="1"/>
</dbReference>
<dbReference type="FunFam" id="1.20.5.370:FF:000010">
    <property type="entry name" value="Myosin heavy chain, isoform G"/>
    <property type="match status" value="1"/>
</dbReference>
<dbReference type="FunFam" id="3.40.850.10:FF:000024">
    <property type="entry name" value="Myosin heavy chain, isoform J"/>
    <property type="match status" value="1"/>
</dbReference>
<dbReference type="FunFam" id="1.20.120.720:FF:000001">
    <property type="entry name" value="Myosin heavy chain, muscle"/>
    <property type="match status" value="1"/>
</dbReference>
<dbReference type="Gene3D" id="1.10.10.820">
    <property type="match status" value="1"/>
</dbReference>
<dbReference type="Gene3D" id="1.20.5.340">
    <property type="match status" value="6"/>
</dbReference>
<dbReference type="Gene3D" id="1.20.5.370">
    <property type="match status" value="4"/>
</dbReference>
<dbReference type="Gene3D" id="1.20.5.4820">
    <property type="match status" value="1"/>
</dbReference>
<dbReference type="Gene3D" id="1.20.58.530">
    <property type="match status" value="1"/>
</dbReference>
<dbReference type="Gene3D" id="3.40.850.10">
    <property type="entry name" value="Kinesin motor domain"/>
    <property type="match status" value="1"/>
</dbReference>
<dbReference type="Gene3D" id="2.30.30.360">
    <property type="entry name" value="Myosin S1 fragment, N-terminal"/>
    <property type="match status" value="1"/>
</dbReference>
<dbReference type="Gene3D" id="1.20.120.720">
    <property type="entry name" value="Myosin VI head, motor domain, U50 subdomain"/>
    <property type="match status" value="1"/>
</dbReference>
<dbReference type="InterPro" id="IPR036961">
    <property type="entry name" value="Kinesin_motor_dom_sf"/>
</dbReference>
<dbReference type="InterPro" id="IPR001609">
    <property type="entry name" value="Myosin_head_motor_dom-like"/>
</dbReference>
<dbReference type="InterPro" id="IPR004009">
    <property type="entry name" value="Myosin_N"/>
</dbReference>
<dbReference type="InterPro" id="IPR008989">
    <property type="entry name" value="Myosin_S1_N"/>
</dbReference>
<dbReference type="InterPro" id="IPR002928">
    <property type="entry name" value="Myosin_tail"/>
</dbReference>
<dbReference type="InterPro" id="IPR027417">
    <property type="entry name" value="P-loop_NTPase"/>
</dbReference>
<dbReference type="InterPro" id="IPR014751">
    <property type="entry name" value="XRCC4-like_C"/>
</dbReference>
<dbReference type="PANTHER" id="PTHR13140">
    <property type="entry name" value="MYOSIN"/>
    <property type="match status" value="1"/>
</dbReference>
<dbReference type="PANTHER" id="PTHR13140:SF857">
    <property type="entry name" value="MYOSIN-11"/>
    <property type="match status" value="1"/>
</dbReference>
<dbReference type="Pfam" id="PF00063">
    <property type="entry name" value="Myosin_head"/>
    <property type="match status" value="1"/>
</dbReference>
<dbReference type="Pfam" id="PF02736">
    <property type="entry name" value="Myosin_N"/>
    <property type="match status" value="1"/>
</dbReference>
<dbReference type="Pfam" id="PF01576">
    <property type="entry name" value="Myosin_tail_1"/>
    <property type="match status" value="1"/>
</dbReference>
<dbReference type="PRINTS" id="PR00193">
    <property type="entry name" value="MYOSINHEAVY"/>
</dbReference>
<dbReference type="SMART" id="SM00242">
    <property type="entry name" value="MYSc"/>
    <property type="match status" value="1"/>
</dbReference>
<dbReference type="SUPFAM" id="SSF90257">
    <property type="entry name" value="Myosin rod fragments"/>
    <property type="match status" value="4"/>
</dbReference>
<dbReference type="SUPFAM" id="SSF52540">
    <property type="entry name" value="P-loop containing nucleoside triphosphate hydrolases"/>
    <property type="match status" value="1"/>
</dbReference>
<dbReference type="SUPFAM" id="SSF57997">
    <property type="entry name" value="Tropomyosin"/>
    <property type="match status" value="1"/>
</dbReference>
<dbReference type="PROSITE" id="PS50096">
    <property type="entry name" value="IQ"/>
    <property type="match status" value="1"/>
</dbReference>
<dbReference type="PROSITE" id="PS51456">
    <property type="entry name" value="MYOSIN_MOTOR"/>
    <property type="match status" value="1"/>
</dbReference>
<dbReference type="PROSITE" id="PS51844">
    <property type="entry name" value="SH3_LIKE"/>
    <property type="match status" value="1"/>
</dbReference>